<sequence length="464" mass="52356">MMIEIGTTKYVIYAKVIVDGYVEKHDIIGAIFGQTEGLLGSDLDLRDLQKSGRIGRIDVELENINGKSYAKLIFPSSLDRVETAIIAATIETLDRVGPCIATIKVLNIEDIRIKKRQYITDRAKELLKSIVDTTIDTYEIAEEIKEFVRSEEIIEMGNEKLPSGPNVEDSDTIIIVEGRADVLNLLRCGIKNAIAVGGTSIPESIIELSKKKTTTIFTDGDRGGELILKEAIQTCDIDYVARAPKGREVEELTKKEVVKYLRSKIPIEQYIQFHSNKCNELLKKSKEYRSNTINNNNDSGKISIDSIISENATNDIGELPVSKTSKNERNNTKVIDENIEKNNQNIKEDNNIEIKQSDISEILKKDCSEQWEYIESLLNDISNTDNIKIITNDNIIKTIHYSELDKIDKSDIQMVMSDMPITQKITDLFHECSPIIIGRDINITKKPAKLKVFSHDMLKNMVCL</sequence>
<keyword id="KW-0235">DNA replication</keyword>
<keyword id="KW-0240">DNA-directed RNA polymerase</keyword>
<keyword id="KW-0460">Magnesium</keyword>
<keyword id="KW-0479">Metal-binding</keyword>
<keyword id="KW-0548">Nucleotidyltransferase</keyword>
<keyword id="KW-0639">Primosome</keyword>
<keyword id="KW-0804">Transcription</keyword>
<keyword id="KW-0808">Transferase</keyword>
<dbReference type="EC" id="2.7.7.101" evidence="1"/>
<dbReference type="EMBL" id="CP000743">
    <property type="protein sequence ID" value="ABR56324.1"/>
    <property type="molecule type" value="Genomic_DNA"/>
</dbReference>
<dbReference type="SMR" id="A6UV02"/>
<dbReference type="STRING" id="419665.Maeo_0741"/>
<dbReference type="KEGG" id="mae:Maeo_0741"/>
<dbReference type="eggNOG" id="arCOG04281">
    <property type="taxonomic scope" value="Archaea"/>
</dbReference>
<dbReference type="HOGENOM" id="CLU_034626_0_0_2"/>
<dbReference type="Proteomes" id="UP000001106">
    <property type="component" value="Chromosome"/>
</dbReference>
<dbReference type="GO" id="GO:0005737">
    <property type="term" value="C:cytoplasm"/>
    <property type="evidence" value="ECO:0007669"/>
    <property type="project" value="TreeGrafter"/>
</dbReference>
<dbReference type="GO" id="GO:0000428">
    <property type="term" value="C:DNA-directed RNA polymerase complex"/>
    <property type="evidence" value="ECO:0007669"/>
    <property type="project" value="UniProtKB-KW"/>
</dbReference>
<dbReference type="GO" id="GO:0000178">
    <property type="term" value="C:exosome (RNase complex)"/>
    <property type="evidence" value="ECO:0007669"/>
    <property type="project" value="InterPro"/>
</dbReference>
<dbReference type="GO" id="GO:1990077">
    <property type="term" value="C:primosome complex"/>
    <property type="evidence" value="ECO:0007669"/>
    <property type="project" value="UniProtKB-KW"/>
</dbReference>
<dbReference type="GO" id="GO:0003899">
    <property type="term" value="F:DNA-directed RNA polymerase activity"/>
    <property type="evidence" value="ECO:0007669"/>
    <property type="project" value="InterPro"/>
</dbReference>
<dbReference type="GO" id="GO:0046872">
    <property type="term" value="F:metal ion binding"/>
    <property type="evidence" value="ECO:0007669"/>
    <property type="project" value="UniProtKB-KW"/>
</dbReference>
<dbReference type="GO" id="GO:0008143">
    <property type="term" value="F:poly(A) binding"/>
    <property type="evidence" value="ECO:0007669"/>
    <property type="project" value="InterPro"/>
</dbReference>
<dbReference type="GO" id="GO:0006269">
    <property type="term" value="P:DNA replication, synthesis of primer"/>
    <property type="evidence" value="ECO:0007669"/>
    <property type="project" value="UniProtKB-UniRule"/>
</dbReference>
<dbReference type="CDD" id="cd01029">
    <property type="entry name" value="TOPRIM_primases"/>
    <property type="match status" value="1"/>
</dbReference>
<dbReference type="FunFam" id="3.40.1360.10:FF:000010">
    <property type="entry name" value="DNA primase DnaG"/>
    <property type="match status" value="1"/>
</dbReference>
<dbReference type="Gene3D" id="3.40.1360.10">
    <property type="match status" value="1"/>
</dbReference>
<dbReference type="HAMAP" id="MF_00007">
    <property type="entry name" value="DNA_primase_DnaG_arc"/>
    <property type="match status" value="1"/>
</dbReference>
<dbReference type="InterPro" id="IPR050219">
    <property type="entry name" value="DnaG_primase"/>
</dbReference>
<dbReference type="InterPro" id="IPR020607">
    <property type="entry name" value="Primase_DnaG_arc"/>
</dbReference>
<dbReference type="InterPro" id="IPR034154">
    <property type="entry name" value="TOPRIM_DnaG/twinkle"/>
</dbReference>
<dbReference type="InterPro" id="IPR006171">
    <property type="entry name" value="TOPRIM_dom"/>
</dbReference>
<dbReference type="NCBIfam" id="NF003108">
    <property type="entry name" value="PRK04031.1-1"/>
    <property type="match status" value="1"/>
</dbReference>
<dbReference type="PANTHER" id="PTHR30313">
    <property type="entry name" value="DNA PRIMASE"/>
    <property type="match status" value="1"/>
</dbReference>
<dbReference type="PANTHER" id="PTHR30313:SF2">
    <property type="entry name" value="DNA PRIMASE"/>
    <property type="match status" value="1"/>
</dbReference>
<dbReference type="Pfam" id="PF13662">
    <property type="entry name" value="Toprim_4"/>
    <property type="match status" value="1"/>
</dbReference>
<dbReference type="SMART" id="SM00493">
    <property type="entry name" value="TOPRIM"/>
    <property type="match status" value="1"/>
</dbReference>
<dbReference type="SUPFAM" id="SSF56731">
    <property type="entry name" value="DNA primase core"/>
    <property type="match status" value="1"/>
</dbReference>
<dbReference type="PROSITE" id="PS50880">
    <property type="entry name" value="TOPRIM"/>
    <property type="match status" value="1"/>
</dbReference>
<gene>
    <name evidence="1" type="primary">dnaG</name>
    <name type="ordered locus">Maeo_0741</name>
</gene>
<proteinExistence type="inferred from homology"/>
<organism>
    <name type="scientific">Methanococcus aeolicus (strain ATCC BAA-1280 / DSM 17508 / OCM 812 / Nankai-3)</name>
    <dbReference type="NCBI Taxonomy" id="419665"/>
    <lineage>
        <taxon>Archaea</taxon>
        <taxon>Methanobacteriati</taxon>
        <taxon>Methanobacteriota</taxon>
        <taxon>Methanomada group</taxon>
        <taxon>Methanococci</taxon>
        <taxon>Methanococcales</taxon>
        <taxon>Methanococcaceae</taxon>
        <taxon>Methanococcus</taxon>
    </lineage>
</organism>
<accession>A6UV02</accession>
<reference key="1">
    <citation type="submission" date="2007-06" db="EMBL/GenBank/DDBJ databases">
        <title>Complete sequence of Methanococcus aeolicus Nankai-3.</title>
        <authorList>
            <consortium name="US DOE Joint Genome Institute"/>
            <person name="Copeland A."/>
            <person name="Lucas S."/>
            <person name="Lapidus A."/>
            <person name="Barry K."/>
            <person name="Glavina del Rio T."/>
            <person name="Dalin E."/>
            <person name="Tice H."/>
            <person name="Pitluck S."/>
            <person name="Chain P."/>
            <person name="Malfatti S."/>
            <person name="Shin M."/>
            <person name="Vergez L."/>
            <person name="Schmutz J."/>
            <person name="Larimer F."/>
            <person name="Land M."/>
            <person name="Hauser L."/>
            <person name="Kyrpides N."/>
            <person name="Lykidis A."/>
            <person name="Sieprawska-Lupa M."/>
            <person name="Whitman W.B."/>
            <person name="Richardson P."/>
        </authorList>
    </citation>
    <scope>NUCLEOTIDE SEQUENCE [LARGE SCALE GENOMIC DNA]</scope>
    <source>
        <strain>ATCC BAA-1280 / DSM 17508 / OCM 812 / Nankai-3</strain>
    </source>
</reference>
<protein>
    <recommendedName>
        <fullName evidence="1">DNA primase DnaG</fullName>
        <ecNumber evidence="1">2.7.7.101</ecNumber>
    </recommendedName>
</protein>
<name>DNAG_META3</name>
<evidence type="ECO:0000255" key="1">
    <source>
        <dbReference type="HAMAP-Rule" id="MF_00007"/>
    </source>
</evidence>
<feature type="chain" id="PRO_0000321493" description="DNA primase DnaG">
    <location>
        <begin position="1"/>
        <end position="464"/>
    </location>
</feature>
<feature type="domain" description="Toprim" evidence="1">
    <location>
        <begin position="171"/>
        <end position="245"/>
    </location>
</feature>
<feature type="binding site" evidence="1">
    <location>
        <position position="177"/>
    </location>
    <ligand>
        <name>Mg(2+)</name>
        <dbReference type="ChEBI" id="CHEBI:18420"/>
        <label>1</label>
        <note>catalytic</note>
    </ligand>
</feature>
<feature type="binding site" evidence="1">
    <location>
        <position position="219"/>
    </location>
    <ligand>
        <name>Mg(2+)</name>
        <dbReference type="ChEBI" id="CHEBI:18420"/>
        <label>1</label>
        <note>catalytic</note>
    </ligand>
</feature>
<feature type="binding site" evidence="1">
    <location>
        <position position="219"/>
    </location>
    <ligand>
        <name>Mg(2+)</name>
        <dbReference type="ChEBI" id="CHEBI:18420"/>
        <label>2</label>
    </ligand>
</feature>
<feature type="binding site" evidence="1">
    <location>
        <position position="221"/>
    </location>
    <ligand>
        <name>Mg(2+)</name>
        <dbReference type="ChEBI" id="CHEBI:18420"/>
        <label>2</label>
    </ligand>
</feature>
<comment type="function">
    <text evidence="1">RNA polymerase that catalyzes the synthesis of short RNA molecules used as primers for DNA polymerase during DNA replication.</text>
</comment>
<comment type="catalytic activity">
    <reaction evidence="1">
        <text>ssDNA + n NTP = ssDNA/pppN(pN)n-1 hybrid + (n-1) diphosphate.</text>
        <dbReference type="EC" id="2.7.7.101"/>
    </reaction>
</comment>
<comment type="cofactor">
    <cofactor evidence="1">
        <name>Mg(2+)</name>
        <dbReference type="ChEBI" id="CHEBI:18420"/>
    </cofactor>
    <text evidence="1">Binds two Mg(2+) per subunit.</text>
</comment>
<comment type="subunit">
    <text evidence="1">Forms a ternary complex with MCM helicase and DNA.</text>
</comment>
<comment type="similarity">
    <text evidence="1">Belongs to the archaeal DnaG primase family.</text>
</comment>